<proteinExistence type="inferred from homology"/>
<comment type="function">
    <text evidence="1">Reversibly transfers an adenylyl group from ATP to 4'-phosphopantetheine, yielding dephospho-CoA (dPCoA) and pyrophosphate.</text>
</comment>
<comment type="catalytic activity">
    <reaction evidence="1">
        <text>(R)-4'-phosphopantetheine + ATP + H(+) = 3'-dephospho-CoA + diphosphate</text>
        <dbReference type="Rhea" id="RHEA:19801"/>
        <dbReference type="ChEBI" id="CHEBI:15378"/>
        <dbReference type="ChEBI" id="CHEBI:30616"/>
        <dbReference type="ChEBI" id="CHEBI:33019"/>
        <dbReference type="ChEBI" id="CHEBI:57328"/>
        <dbReference type="ChEBI" id="CHEBI:61723"/>
        <dbReference type="EC" id="2.7.7.3"/>
    </reaction>
</comment>
<comment type="cofactor">
    <cofactor evidence="1">
        <name>Mg(2+)</name>
        <dbReference type="ChEBI" id="CHEBI:18420"/>
    </cofactor>
</comment>
<comment type="pathway">
    <text evidence="1">Cofactor biosynthesis; coenzyme A biosynthesis; CoA from (R)-pantothenate: step 4/5.</text>
</comment>
<comment type="subunit">
    <text evidence="1">Homohexamer.</text>
</comment>
<comment type="subcellular location">
    <subcellularLocation>
        <location evidence="1">Cytoplasm</location>
    </subcellularLocation>
</comment>
<comment type="similarity">
    <text evidence="1">Belongs to the bacterial CoaD family.</text>
</comment>
<protein>
    <recommendedName>
        <fullName evidence="1">Phosphopantetheine adenylyltransferase</fullName>
        <ecNumber evidence="1">2.7.7.3</ecNumber>
    </recommendedName>
    <alternativeName>
        <fullName evidence="1">Dephospho-CoA pyrophosphorylase</fullName>
    </alternativeName>
    <alternativeName>
        <fullName evidence="1">Pantetheine-phosphate adenylyltransferase</fullName>
        <shortName evidence="1">PPAT</shortName>
    </alternativeName>
</protein>
<sequence length="163" mass="18407">MTSIAISSGSFDPITLGHLDIIKRGAKVFDEVYVVVLNNSSKKPFFSVEERLELIREATKDIPNVKVDSHSGLLVEYAKMRNANAILRGLRAVSDFEYEMQITSMNRKLDENIETFFIMTNNQYSFLSSSIVKEVARYGGSVVDLVPPIVERALKEKFQTPLK</sequence>
<gene>
    <name evidence="1" type="primary">coaD</name>
    <name type="ordered locus">BCB4264_A4030</name>
</gene>
<keyword id="KW-0067">ATP-binding</keyword>
<keyword id="KW-0173">Coenzyme A biosynthesis</keyword>
<keyword id="KW-0963">Cytoplasm</keyword>
<keyword id="KW-0460">Magnesium</keyword>
<keyword id="KW-0547">Nucleotide-binding</keyword>
<keyword id="KW-0548">Nucleotidyltransferase</keyword>
<keyword id="KW-0808">Transferase</keyword>
<name>COAD_BACC4</name>
<organism>
    <name type="scientific">Bacillus cereus (strain B4264)</name>
    <dbReference type="NCBI Taxonomy" id="405532"/>
    <lineage>
        <taxon>Bacteria</taxon>
        <taxon>Bacillati</taxon>
        <taxon>Bacillota</taxon>
        <taxon>Bacilli</taxon>
        <taxon>Bacillales</taxon>
        <taxon>Bacillaceae</taxon>
        <taxon>Bacillus</taxon>
        <taxon>Bacillus cereus group</taxon>
    </lineage>
</organism>
<reference key="1">
    <citation type="submission" date="2008-10" db="EMBL/GenBank/DDBJ databases">
        <title>Genome sequence of Bacillus cereus B4264.</title>
        <authorList>
            <person name="Dodson R.J."/>
            <person name="Durkin A.S."/>
            <person name="Rosovitz M.J."/>
            <person name="Rasko D.A."/>
            <person name="Hoffmaster A."/>
            <person name="Ravel J."/>
            <person name="Sutton G."/>
        </authorList>
    </citation>
    <scope>NUCLEOTIDE SEQUENCE [LARGE SCALE GENOMIC DNA]</scope>
    <source>
        <strain>B4264</strain>
    </source>
</reference>
<feature type="chain" id="PRO_1000118068" description="Phosphopantetheine adenylyltransferase">
    <location>
        <begin position="1"/>
        <end position="163"/>
    </location>
</feature>
<feature type="binding site" evidence="1">
    <location>
        <begin position="10"/>
        <end position="11"/>
    </location>
    <ligand>
        <name>ATP</name>
        <dbReference type="ChEBI" id="CHEBI:30616"/>
    </ligand>
</feature>
<feature type="binding site" evidence="1">
    <location>
        <position position="10"/>
    </location>
    <ligand>
        <name>substrate</name>
    </ligand>
</feature>
<feature type="binding site" evidence="1">
    <location>
        <position position="18"/>
    </location>
    <ligand>
        <name>ATP</name>
        <dbReference type="ChEBI" id="CHEBI:30616"/>
    </ligand>
</feature>
<feature type="binding site" evidence="1">
    <location>
        <position position="42"/>
    </location>
    <ligand>
        <name>substrate</name>
    </ligand>
</feature>
<feature type="binding site" evidence="1">
    <location>
        <position position="74"/>
    </location>
    <ligand>
        <name>substrate</name>
    </ligand>
</feature>
<feature type="binding site" evidence="1">
    <location>
        <position position="88"/>
    </location>
    <ligand>
        <name>substrate</name>
    </ligand>
</feature>
<feature type="binding site" evidence="1">
    <location>
        <begin position="89"/>
        <end position="91"/>
    </location>
    <ligand>
        <name>ATP</name>
        <dbReference type="ChEBI" id="CHEBI:30616"/>
    </ligand>
</feature>
<feature type="binding site" evidence="1">
    <location>
        <position position="99"/>
    </location>
    <ligand>
        <name>ATP</name>
        <dbReference type="ChEBI" id="CHEBI:30616"/>
    </ligand>
</feature>
<feature type="binding site" evidence="1">
    <location>
        <begin position="124"/>
        <end position="130"/>
    </location>
    <ligand>
        <name>ATP</name>
        <dbReference type="ChEBI" id="CHEBI:30616"/>
    </ligand>
</feature>
<feature type="site" description="Transition state stabilizer" evidence="1">
    <location>
        <position position="18"/>
    </location>
</feature>
<dbReference type="EC" id="2.7.7.3" evidence="1"/>
<dbReference type="EMBL" id="CP001176">
    <property type="protein sequence ID" value="ACK59668.1"/>
    <property type="molecule type" value="Genomic_DNA"/>
</dbReference>
<dbReference type="RefSeq" id="WP_000200601.1">
    <property type="nucleotide sequence ID" value="NZ_VEHB01000002.1"/>
</dbReference>
<dbReference type="SMR" id="B7H6R5"/>
<dbReference type="GeneID" id="92883649"/>
<dbReference type="KEGG" id="bcb:BCB4264_A4030"/>
<dbReference type="HOGENOM" id="CLU_100149_0_1_9"/>
<dbReference type="UniPathway" id="UPA00241">
    <property type="reaction ID" value="UER00355"/>
</dbReference>
<dbReference type="Proteomes" id="UP000007096">
    <property type="component" value="Chromosome"/>
</dbReference>
<dbReference type="GO" id="GO:0005737">
    <property type="term" value="C:cytoplasm"/>
    <property type="evidence" value="ECO:0007669"/>
    <property type="project" value="UniProtKB-SubCell"/>
</dbReference>
<dbReference type="GO" id="GO:0005524">
    <property type="term" value="F:ATP binding"/>
    <property type="evidence" value="ECO:0007669"/>
    <property type="project" value="UniProtKB-KW"/>
</dbReference>
<dbReference type="GO" id="GO:0004595">
    <property type="term" value="F:pantetheine-phosphate adenylyltransferase activity"/>
    <property type="evidence" value="ECO:0007669"/>
    <property type="project" value="UniProtKB-UniRule"/>
</dbReference>
<dbReference type="GO" id="GO:0015937">
    <property type="term" value="P:coenzyme A biosynthetic process"/>
    <property type="evidence" value="ECO:0007669"/>
    <property type="project" value="UniProtKB-UniRule"/>
</dbReference>
<dbReference type="CDD" id="cd02163">
    <property type="entry name" value="PPAT"/>
    <property type="match status" value="1"/>
</dbReference>
<dbReference type="FunFam" id="3.40.50.620:FF:000012">
    <property type="entry name" value="Phosphopantetheine adenylyltransferase"/>
    <property type="match status" value="1"/>
</dbReference>
<dbReference type="Gene3D" id="3.40.50.620">
    <property type="entry name" value="HUPs"/>
    <property type="match status" value="1"/>
</dbReference>
<dbReference type="HAMAP" id="MF_00151">
    <property type="entry name" value="PPAT_bact"/>
    <property type="match status" value="1"/>
</dbReference>
<dbReference type="InterPro" id="IPR004821">
    <property type="entry name" value="Cyt_trans-like"/>
</dbReference>
<dbReference type="InterPro" id="IPR001980">
    <property type="entry name" value="PPAT"/>
</dbReference>
<dbReference type="InterPro" id="IPR014729">
    <property type="entry name" value="Rossmann-like_a/b/a_fold"/>
</dbReference>
<dbReference type="NCBIfam" id="TIGR01510">
    <property type="entry name" value="coaD_prev_kdtB"/>
    <property type="match status" value="1"/>
</dbReference>
<dbReference type="NCBIfam" id="TIGR00125">
    <property type="entry name" value="cyt_tran_rel"/>
    <property type="match status" value="1"/>
</dbReference>
<dbReference type="PANTHER" id="PTHR21342">
    <property type="entry name" value="PHOSPHOPANTETHEINE ADENYLYLTRANSFERASE"/>
    <property type="match status" value="1"/>
</dbReference>
<dbReference type="PANTHER" id="PTHR21342:SF1">
    <property type="entry name" value="PHOSPHOPANTETHEINE ADENYLYLTRANSFERASE"/>
    <property type="match status" value="1"/>
</dbReference>
<dbReference type="Pfam" id="PF01467">
    <property type="entry name" value="CTP_transf_like"/>
    <property type="match status" value="1"/>
</dbReference>
<dbReference type="PRINTS" id="PR01020">
    <property type="entry name" value="LPSBIOSNTHSS"/>
</dbReference>
<dbReference type="SUPFAM" id="SSF52374">
    <property type="entry name" value="Nucleotidylyl transferase"/>
    <property type="match status" value="1"/>
</dbReference>
<accession>B7H6R5</accession>
<evidence type="ECO:0000255" key="1">
    <source>
        <dbReference type="HAMAP-Rule" id="MF_00151"/>
    </source>
</evidence>